<feature type="chain" id="PRO_1000086709" description="Large ribosomal subunit protein uL15">
    <location>
        <begin position="1"/>
        <end position="143"/>
    </location>
</feature>
<feature type="region of interest" description="Disordered" evidence="2">
    <location>
        <begin position="20"/>
        <end position="52"/>
    </location>
</feature>
<feature type="compositionally biased region" description="Basic residues" evidence="2">
    <location>
        <begin position="30"/>
        <end position="39"/>
    </location>
</feature>
<keyword id="KW-0687">Ribonucleoprotein</keyword>
<keyword id="KW-0689">Ribosomal protein</keyword>
<keyword id="KW-0694">RNA-binding</keyword>
<keyword id="KW-0699">rRNA-binding</keyword>
<name>RL15_COXBR</name>
<accession>A9NAY9</accession>
<sequence length="143" mass="15285">MQLNDLKPAKGARHQKLRVGRGIGSGKGKTAGRGHKGQHSRAGGYHKVGFEGGQMPLQRRVPKFGFTSRKELISAEVRLGELNKISGDVVDLASLKAANIISRQIKRVKIFAAGKLEKPVTIRGLRVTKGVKAAVEAAGGKIE</sequence>
<dbReference type="EMBL" id="CP000890">
    <property type="protein sequence ID" value="ABX79086.1"/>
    <property type="molecule type" value="Genomic_DNA"/>
</dbReference>
<dbReference type="RefSeq" id="WP_010957463.1">
    <property type="nucleotide sequence ID" value="NC_010117.1"/>
</dbReference>
<dbReference type="SMR" id="A9NAY9"/>
<dbReference type="KEGG" id="cbs:COXBURSA331_A0356"/>
<dbReference type="HOGENOM" id="CLU_055188_4_2_6"/>
<dbReference type="GO" id="GO:0022625">
    <property type="term" value="C:cytosolic large ribosomal subunit"/>
    <property type="evidence" value="ECO:0007669"/>
    <property type="project" value="TreeGrafter"/>
</dbReference>
<dbReference type="GO" id="GO:0019843">
    <property type="term" value="F:rRNA binding"/>
    <property type="evidence" value="ECO:0007669"/>
    <property type="project" value="UniProtKB-UniRule"/>
</dbReference>
<dbReference type="GO" id="GO:0003735">
    <property type="term" value="F:structural constituent of ribosome"/>
    <property type="evidence" value="ECO:0007669"/>
    <property type="project" value="InterPro"/>
</dbReference>
<dbReference type="GO" id="GO:0006412">
    <property type="term" value="P:translation"/>
    <property type="evidence" value="ECO:0007669"/>
    <property type="project" value="UniProtKB-UniRule"/>
</dbReference>
<dbReference type="Gene3D" id="3.100.10.10">
    <property type="match status" value="1"/>
</dbReference>
<dbReference type="HAMAP" id="MF_01341">
    <property type="entry name" value="Ribosomal_uL15"/>
    <property type="match status" value="1"/>
</dbReference>
<dbReference type="InterPro" id="IPR030878">
    <property type="entry name" value="Ribosomal_uL15"/>
</dbReference>
<dbReference type="InterPro" id="IPR021131">
    <property type="entry name" value="Ribosomal_uL15/eL18"/>
</dbReference>
<dbReference type="InterPro" id="IPR036227">
    <property type="entry name" value="Ribosomal_uL15/eL18_sf"/>
</dbReference>
<dbReference type="InterPro" id="IPR005749">
    <property type="entry name" value="Ribosomal_uL15_bac-type"/>
</dbReference>
<dbReference type="NCBIfam" id="TIGR01071">
    <property type="entry name" value="rplO_bact"/>
    <property type="match status" value="1"/>
</dbReference>
<dbReference type="PANTHER" id="PTHR12934">
    <property type="entry name" value="50S RIBOSOMAL PROTEIN L15"/>
    <property type="match status" value="1"/>
</dbReference>
<dbReference type="PANTHER" id="PTHR12934:SF11">
    <property type="entry name" value="LARGE RIBOSOMAL SUBUNIT PROTEIN UL15M"/>
    <property type="match status" value="1"/>
</dbReference>
<dbReference type="Pfam" id="PF00828">
    <property type="entry name" value="Ribosomal_L27A"/>
    <property type="match status" value="1"/>
</dbReference>
<dbReference type="SUPFAM" id="SSF52080">
    <property type="entry name" value="Ribosomal proteins L15p and L18e"/>
    <property type="match status" value="1"/>
</dbReference>
<protein>
    <recommendedName>
        <fullName evidence="1">Large ribosomal subunit protein uL15</fullName>
    </recommendedName>
    <alternativeName>
        <fullName evidence="3">50S ribosomal protein L15</fullName>
    </alternativeName>
</protein>
<reference key="1">
    <citation type="submission" date="2007-11" db="EMBL/GenBank/DDBJ databases">
        <title>Genome sequencing of phylogenetically and phenotypically diverse Coxiella burnetii isolates.</title>
        <authorList>
            <person name="Seshadri R."/>
            <person name="Samuel J.E."/>
        </authorList>
    </citation>
    <scope>NUCLEOTIDE SEQUENCE [LARGE SCALE GENOMIC DNA]</scope>
    <source>
        <strain>RSA 331 / Henzerling II</strain>
    </source>
</reference>
<gene>
    <name evidence="1" type="primary">rplO</name>
    <name type="ordered locus">COXBURSA331_A0356</name>
</gene>
<proteinExistence type="inferred from homology"/>
<comment type="function">
    <text evidence="1">Binds to the 23S rRNA.</text>
</comment>
<comment type="subunit">
    <text evidence="1">Part of the 50S ribosomal subunit.</text>
</comment>
<comment type="similarity">
    <text evidence="1">Belongs to the universal ribosomal protein uL15 family.</text>
</comment>
<evidence type="ECO:0000255" key="1">
    <source>
        <dbReference type="HAMAP-Rule" id="MF_01341"/>
    </source>
</evidence>
<evidence type="ECO:0000256" key="2">
    <source>
        <dbReference type="SAM" id="MobiDB-lite"/>
    </source>
</evidence>
<evidence type="ECO:0000305" key="3"/>
<organism>
    <name type="scientific">Coxiella burnetii (strain RSA 331 / Henzerling II)</name>
    <dbReference type="NCBI Taxonomy" id="360115"/>
    <lineage>
        <taxon>Bacteria</taxon>
        <taxon>Pseudomonadati</taxon>
        <taxon>Pseudomonadota</taxon>
        <taxon>Gammaproteobacteria</taxon>
        <taxon>Legionellales</taxon>
        <taxon>Coxiellaceae</taxon>
        <taxon>Coxiella</taxon>
    </lineage>
</organism>